<reference key="1">
    <citation type="journal article" date="1998" name="Plant Mol. Biol.">
        <title>cDNA cloning, substrate specificity and expression study of tobacco caffeoyl-CoA 3-O-methyltransferase, a lignin biosynthetic enzyme.</title>
        <authorList>
            <person name="Martz F."/>
            <person name="Maury S."/>
            <person name="Pincon G."/>
            <person name="Legrand M."/>
        </authorList>
    </citation>
    <scope>NUCLEOTIDE SEQUENCE [MRNA]</scope>
    <source>
        <strain>cv. Samsun NN</strain>
        <tissue>Leaf</tissue>
    </source>
</reference>
<reference key="2">
    <citation type="journal article" date="1999" name="Plant Physiol.">
        <title>Tobacco O-methyltransferases involved in phenylpropanoid metabolism. The different caffeoyl-coenzyme A/5-hydroxyferuloyl-coenzyme A 3/5-O-methyltransferase and caffeic acid/5-hydroxyferulic acid 3/5-O-methyltransferase classes have distinct substrate specificities and expression patterns.</title>
        <authorList>
            <person name="Maury S."/>
            <person name="Geoffroy P."/>
            <person name="Legrand M."/>
        </authorList>
    </citation>
    <scope>TISSUE SPECIFICITY</scope>
    <scope>SUBSTRATE SPECIFICITY</scope>
    <scope>INDUCTION</scope>
</reference>
<organism>
    <name type="scientific">Nicotiana tabacum</name>
    <name type="common">Common tobacco</name>
    <dbReference type="NCBI Taxonomy" id="4097"/>
    <lineage>
        <taxon>Eukaryota</taxon>
        <taxon>Viridiplantae</taxon>
        <taxon>Streptophyta</taxon>
        <taxon>Embryophyta</taxon>
        <taxon>Tracheophyta</taxon>
        <taxon>Spermatophyta</taxon>
        <taxon>Magnoliopsida</taxon>
        <taxon>eudicotyledons</taxon>
        <taxon>Gunneridae</taxon>
        <taxon>Pentapetalae</taxon>
        <taxon>asterids</taxon>
        <taxon>lamiids</taxon>
        <taxon>Solanales</taxon>
        <taxon>Solanaceae</taxon>
        <taxon>Nicotianoideae</taxon>
        <taxon>Nicotianeae</taxon>
        <taxon>Nicotiana</taxon>
    </lineage>
</organism>
<gene>
    <name type="primary">CCOAOMT2</name>
</gene>
<protein>
    <recommendedName>
        <fullName>Caffeoyl-CoA O-methyltransferase 2</fullName>
        <ecNumber>2.1.1.104</ecNumber>
    </recommendedName>
    <alternativeName>
        <fullName>Trans-caffeoyl-CoA 3-O-methyltransferase 2</fullName>
        <shortName>CCoAMT-2</shortName>
        <shortName>CCoAOMT-2</shortName>
    </alternativeName>
</protein>
<sequence>MATNGENGRHQEVGHKSLLQSDALYQYILETSVYPREPEPMKELREITAKHPWNLMTTSADEGQFLSMLLKLINAKNTMEIGVFTGYSLLATAMALPDDGKILAMDINRENYEIGLPIIEKAGLAHKIVFREGPALPVLDQMIEDGKYHGSYDFIFVDADKDNYLNYHKRLIDLVKVGGLIGYDNTLWNGSVVAPPDAPLRKYVRYYRDFVLELNKALAADSRIEICQLPVGDGITLCRRIS</sequence>
<name>CAMT2_TOBAC</name>
<accession>O24149</accession>
<comment type="function">
    <text>Methylates caffeoyl-CoA to feruloyl-CoA and 5-hydroxyferuloyl-CoA to sinapoyl-CoA. Plays a role in the synthesis of feruloylated polysaccharides. Involved in the reinforcement of the plant cell wall. Also involved in the responding to wounding or pathogen challenge by the increased formation of cell wall-bound ferulic acid polymers. Methylates 5-hydroxyferulolyl-CoA more efficiently than caffeoyl-CoA.</text>
</comment>
<comment type="catalytic activity">
    <reaction>
        <text>(E)-caffeoyl-CoA + S-adenosyl-L-methionine = (E)-feruloyl-CoA + S-adenosyl-L-homocysteine + H(+)</text>
        <dbReference type="Rhea" id="RHEA:16925"/>
        <dbReference type="ChEBI" id="CHEBI:15378"/>
        <dbReference type="ChEBI" id="CHEBI:57856"/>
        <dbReference type="ChEBI" id="CHEBI:59789"/>
        <dbReference type="ChEBI" id="CHEBI:87136"/>
        <dbReference type="ChEBI" id="CHEBI:87305"/>
        <dbReference type="EC" id="2.1.1.104"/>
    </reaction>
</comment>
<comment type="cofactor">
    <cofactor evidence="1">
        <name>Mg(2+)</name>
        <dbReference type="ChEBI" id="CHEBI:18420"/>
    </cofactor>
    <text evidence="1">Binds 1 Mg(2+) ion per subunit.</text>
</comment>
<comment type="pathway">
    <text>Aromatic compound metabolism; phenylpropanoid biosynthesis.</text>
</comment>
<comment type="tissue specificity">
    <text evidence="4">Mostly expressed in the bottom and middle parts of the stems.</text>
</comment>
<comment type="induction">
    <text evidence="4">By wounding and viral infection.</text>
</comment>
<comment type="similarity">
    <text evidence="3">Belongs to the class I-like SAM-binding methyltransferase superfamily. Cation-dependent O-methyltransferase family. CCoAMT subfamily.</text>
</comment>
<feature type="chain" id="PRO_0000165698" description="Caffeoyl-CoA O-methyltransferase 2">
    <location>
        <begin position="1"/>
        <end position="242"/>
    </location>
</feature>
<feature type="binding site" evidence="2">
    <location>
        <position position="16"/>
    </location>
    <ligand>
        <name>substrate</name>
    </ligand>
</feature>
<feature type="binding site" evidence="3">
    <location>
        <position position="58"/>
    </location>
    <ligand>
        <name>S-adenosyl-L-methionine</name>
        <dbReference type="ChEBI" id="CHEBI:59789"/>
    </ligand>
</feature>
<feature type="binding site" evidence="3">
    <location>
        <position position="80"/>
    </location>
    <ligand>
        <name>S-adenosyl-L-methionine</name>
        <dbReference type="ChEBI" id="CHEBI:59789"/>
    </ligand>
</feature>
<feature type="binding site" evidence="3">
    <location>
        <begin position="82"/>
        <end position="83"/>
    </location>
    <ligand>
        <name>S-adenosyl-L-methionine</name>
        <dbReference type="ChEBI" id="CHEBI:59789"/>
    </ligand>
</feature>
<feature type="binding site" evidence="3">
    <location>
        <position position="88"/>
    </location>
    <ligand>
        <name>S-adenosyl-L-methionine</name>
        <dbReference type="ChEBI" id="CHEBI:59789"/>
    </ligand>
</feature>
<feature type="binding site" evidence="3">
    <location>
        <position position="106"/>
    </location>
    <ligand>
        <name>S-adenosyl-L-methionine</name>
        <dbReference type="ChEBI" id="CHEBI:59789"/>
    </ligand>
</feature>
<feature type="binding site" evidence="3">
    <location>
        <position position="135"/>
    </location>
    <ligand>
        <name>S-adenosyl-L-methionine</name>
        <dbReference type="ChEBI" id="CHEBI:59789"/>
    </ligand>
</feature>
<feature type="binding site" evidence="3">
    <location>
        <position position="158"/>
    </location>
    <ligand>
        <name>a divalent metal cation</name>
        <dbReference type="ChEBI" id="CHEBI:60240"/>
    </ligand>
</feature>
<feature type="binding site" evidence="2">
    <location>
        <position position="158"/>
    </location>
    <ligand>
        <name>substrate</name>
    </ligand>
</feature>
<feature type="binding site" evidence="3">
    <location>
        <position position="160"/>
    </location>
    <ligand>
        <name>S-adenosyl-L-methionine</name>
        <dbReference type="ChEBI" id="CHEBI:59789"/>
    </ligand>
</feature>
<feature type="binding site" evidence="3">
    <location>
        <position position="184"/>
    </location>
    <ligand>
        <name>a divalent metal cation</name>
        <dbReference type="ChEBI" id="CHEBI:60240"/>
    </ligand>
</feature>
<feature type="binding site" evidence="3">
    <location>
        <position position="185"/>
    </location>
    <ligand>
        <name>a divalent metal cation</name>
        <dbReference type="ChEBI" id="CHEBI:60240"/>
    </ligand>
</feature>
<feature type="binding site" evidence="2">
    <location>
        <position position="189"/>
    </location>
    <ligand>
        <name>substrate</name>
    </ligand>
</feature>
<evidence type="ECO:0000250" key="1"/>
<evidence type="ECO:0000250" key="2">
    <source>
        <dbReference type="UniProtKB" id="Q40313"/>
    </source>
</evidence>
<evidence type="ECO:0000255" key="3">
    <source>
        <dbReference type="PROSITE-ProRule" id="PRU01019"/>
    </source>
</evidence>
<evidence type="ECO:0000269" key="4">
    <source>
    </source>
</evidence>
<keyword id="KW-0438">Lignin biosynthesis</keyword>
<keyword id="KW-0460">Magnesium</keyword>
<keyword id="KW-0479">Metal-binding</keyword>
<keyword id="KW-0489">Methyltransferase</keyword>
<keyword id="KW-1185">Reference proteome</keyword>
<keyword id="KW-0949">S-adenosyl-L-methionine</keyword>
<keyword id="KW-0808">Transferase</keyword>
<proteinExistence type="evidence at transcript level"/>
<dbReference type="EC" id="2.1.1.104"/>
<dbReference type="EMBL" id="U62734">
    <property type="protein sequence ID" value="AAC49914.1"/>
    <property type="molecule type" value="mRNA"/>
</dbReference>
<dbReference type="PIR" id="T03796">
    <property type="entry name" value="T03796"/>
</dbReference>
<dbReference type="RefSeq" id="XP_016466601.1">
    <property type="nucleotide sequence ID" value="XM_016611115.1"/>
</dbReference>
<dbReference type="SMR" id="O24149"/>
<dbReference type="STRING" id="4097.O24149"/>
<dbReference type="PaxDb" id="4097-O24149"/>
<dbReference type="KEGG" id="nta:107789329"/>
<dbReference type="OMA" id="ARDEYCE"/>
<dbReference type="OrthoDB" id="1213027at2759"/>
<dbReference type="BRENDA" id="2.1.1.104">
    <property type="organism ID" value="3645"/>
</dbReference>
<dbReference type="UniPathway" id="UPA00711"/>
<dbReference type="Proteomes" id="UP000084051">
    <property type="component" value="Unplaced"/>
</dbReference>
<dbReference type="GO" id="GO:0042409">
    <property type="term" value="F:caffeoyl-CoA O-methyltransferase activity"/>
    <property type="evidence" value="ECO:0007669"/>
    <property type="project" value="UniProtKB-EC"/>
</dbReference>
<dbReference type="GO" id="GO:0046872">
    <property type="term" value="F:metal ion binding"/>
    <property type="evidence" value="ECO:0007669"/>
    <property type="project" value="UniProtKB-KW"/>
</dbReference>
<dbReference type="GO" id="GO:0008757">
    <property type="term" value="F:S-adenosylmethionine-dependent methyltransferase activity"/>
    <property type="evidence" value="ECO:0000318"/>
    <property type="project" value="GO_Central"/>
</dbReference>
<dbReference type="GO" id="GO:0009809">
    <property type="term" value="P:lignin biosynthetic process"/>
    <property type="evidence" value="ECO:0007669"/>
    <property type="project" value="UniProtKB-KW"/>
</dbReference>
<dbReference type="GO" id="GO:0032259">
    <property type="term" value="P:methylation"/>
    <property type="evidence" value="ECO:0007669"/>
    <property type="project" value="UniProtKB-KW"/>
</dbReference>
<dbReference type="CDD" id="cd02440">
    <property type="entry name" value="AdoMet_MTases"/>
    <property type="match status" value="1"/>
</dbReference>
<dbReference type="FunFam" id="3.40.50.150:FF:000147">
    <property type="entry name" value="Caffeoyl-CoA O-methyltransferase 1"/>
    <property type="match status" value="1"/>
</dbReference>
<dbReference type="Gene3D" id="3.40.50.150">
    <property type="entry name" value="Vaccinia Virus protein VP39"/>
    <property type="match status" value="1"/>
</dbReference>
<dbReference type="InterPro" id="IPR050362">
    <property type="entry name" value="Cation-dep_OMT"/>
</dbReference>
<dbReference type="InterPro" id="IPR029063">
    <property type="entry name" value="SAM-dependent_MTases_sf"/>
</dbReference>
<dbReference type="InterPro" id="IPR002935">
    <property type="entry name" value="SAM_O-MeTrfase"/>
</dbReference>
<dbReference type="PANTHER" id="PTHR10509:SF74">
    <property type="entry name" value="CAFFEOYL-COA O-METHYLTRANSFERASE 2"/>
    <property type="match status" value="1"/>
</dbReference>
<dbReference type="PANTHER" id="PTHR10509">
    <property type="entry name" value="O-METHYLTRANSFERASE-RELATED"/>
    <property type="match status" value="1"/>
</dbReference>
<dbReference type="Pfam" id="PF01596">
    <property type="entry name" value="Methyltransf_3"/>
    <property type="match status" value="1"/>
</dbReference>
<dbReference type="SUPFAM" id="SSF53335">
    <property type="entry name" value="S-adenosyl-L-methionine-dependent methyltransferases"/>
    <property type="match status" value="1"/>
</dbReference>
<dbReference type="PROSITE" id="PS51682">
    <property type="entry name" value="SAM_OMT_I"/>
    <property type="match status" value="1"/>
</dbReference>